<comment type="subunit">
    <text evidence="1">Homodimer.</text>
</comment>
<name>YOAG_ECOLI</name>
<organism>
    <name type="scientific">Escherichia coli (strain K12)</name>
    <dbReference type="NCBI Taxonomy" id="83333"/>
    <lineage>
        <taxon>Bacteria</taxon>
        <taxon>Pseudomonadati</taxon>
        <taxon>Pseudomonadota</taxon>
        <taxon>Gammaproteobacteria</taxon>
        <taxon>Enterobacterales</taxon>
        <taxon>Enterobacteriaceae</taxon>
        <taxon>Escherichia</taxon>
    </lineage>
</organism>
<accession>P64496</accession>
<accession>P76247</accession>
<accession>Q2MB24</accession>
<protein>
    <recommendedName>
        <fullName>Protein YoaG</fullName>
    </recommendedName>
</protein>
<gene>
    <name type="primary">yoaG</name>
    <name type="ordered locus">b1796</name>
    <name type="ordered locus">JW1785</name>
</gene>
<proteinExistence type="evidence at protein level"/>
<keyword id="KW-0002">3D-structure</keyword>
<keyword id="KW-1185">Reference proteome</keyword>
<evidence type="ECO:0000269" key="1">
    <source ref="3"/>
</evidence>
<evidence type="ECO:0007829" key="2">
    <source>
        <dbReference type="PDB" id="1NEI"/>
    </source>
</evidence>
<reference key="1">
    <citation type="journal article" date="1997" name="Science">
        <title>The complete genome sequence of Escherichia coli K-12.</title>
        <authorList>
            <person name="Blattner F.R."/>
            <person name="Plunkett G. III"/>
            <person name="Bloch C.A."/>
            <person name="Perna N.T."/>
            <person name="Burland V."/>
            <person name="Riley M."/>
            <person name="Collado-Vides J."/>
            <person name="Glasner J.D."/>
            <person name="Rode C.K."/>
            <person name="Mayhew G.F."/>
            <person name="Gregor J."/>
            <person name="Davis N.W."/>
            <person name="Kirkpatrick H.A."/>
            <person name="Goeden M.A."/>
            <person name="Rose D.J."/>
            <person name="Mau B."/>
            <person name="Shao Y."/>
        </authorList>
    </citation>
    <scope>NUCLEOTIDE SEQUENCE [LARGE SCALE GENOMIC DNA]</scope>
    <source>
        <strain>K12 / MG1655 / ATCC 47076</strain>
    </source>
</reference>
<reference key="2">
    <citation type="journal article" date="2006" name="Mol. Syst. Biol.">
        <title>Highly accurate genome sequences of Escherichia coli K-12 strains MG1655 and W3110.</title>
        <authorList>
            <person name="Hayashi K."/>
            <person name="Morooka N."/>
            <person name="Yamamoto Y."/>
            <person name="Fujita K."/>
            <person name="Isono K."/>
            <person name="Choi S."/>
            <person name="Ohtsubo E."/>
            <person name="Baba T."/>
            <person name="Wanner B.L."/>
            <person name="Mori H."/>
            <person name="Horiuchi T."/>
        </authorList>
    </citation>
    <scope>NUCLEOTIDE SEQUENCE [LARGE SCALE GENOMIC DNA]</scope>
    <source>
        <strain>K12 / W3110 / ATCC 27325 / DSM 5911</strain>
    </source>
</reference>
<reference key="3">
    <citation type="submission" date="2005-01" db="PDB data bank">
        <title>Solution structure of hypothetical protein dimer encoded by the yoaG gene from Escherichia coli.</title>
        <authorList>
            <consortium name="Northeast structural genomics consortium (NESG)"/>
        </authorList>
    </citation>
    <scope>STRUCTURE BY NMR</scope>
    <scope>SUBUNIT</scope>
</reference>
<feature type="chain" id="PRO_0000169037" description="Protein YoaG">
    <location>
        <begin position="1"/>
        <end position="60"/>
    </location>
</feature>
<feature type="strand" evidence="2">
    <location>
        <begin position="6"/>
        <end position="12"/>
    </location>
</feature>
<feature type="turn" evidence="2">
    <location>
        <begin position="13"/>
        <end position="15"/>
    </location>
</feature>
<feature type="strand" evidence="2">
    <location>
        <begin position="18"/>
        <end position="22"/>
    </location>
</feature>
<feature type="helix" evidence="2">
    <location>
        <begin position="27"/>
        <end position="29"/>
    </location>
</feature>
<feature type="helix" evidence="2">
    <location>
        <begin position="32"/>
        <end position="48"/>
    </location>
</feature>
<feature type="strand" evidence="2">
    <location>
        <begin position="51"/>
        <end position="55"/>
    </location>
</feature>
<dbReference type="EMBL" id="U00096">
    <property type="protein sequence ID" value="AAC74866.1"/>
    <property type="molecule type" value="Genomic_DNA"/>
</dbReference>
<dbReference type="EMBL" id="AP009048">
    <property type="protein sequence ID" value="BAE76532.1"/>
    <property type="molecule type" value="Genomic_DNA"/>
</dbReference>
<dbReference type="PIR" id="D64940">
    <property type="entry name" value="D64940"/>
</dbReference>
<dbReference type="RefSeq" id="NP_416310.1">
    <property type="nucleotide sequence ID" value="NC_000913.3"/>
</dbReference>
<dbReference type="RefSeq" id="WP_000513737.1">
    <property type="nucleotide sequence ID" value="NZ_STEB01000009.1"/>
</dbReference>
<dbReference type="PDB" id="1NEI">
    <property type="method" value="NMR"/>
    <property type="chains" value="A/B=1-60"/>
</dbReference>
<dbReference type="PDBsum" id="1NEI"/>
<dbReference type="BMRB" id="P64496"/>
<dbReference type="SMR" id="P64496"/>
<dbReference type="FunCoup" id="P64496">
    <property type="interactions" value="9"/>
</dbReference>
<dbReference type="STRING" id="511145.b1796"/>
<dbReference type="PaxDb" id="511145-b1796"/>
<dbReference type="EnsemblBacteria" id="AAC74866">
    <property type="protein sequence ID" value="AAC74866"/>
    <property type="gene ID" value="b1796"/>
</dbReference>
<dbReference type="GeneID" id="946314"/>
<dbReference type="KEGG" id="ecj:JW1785"/>
<dbReference type="KEGG" id="eco:b1796"/>
<dbReference type="KEGG" id="ecoc:C3026_10240"/>
<dbReference type="PATRIC" id="fig|511145.12.peg.1871"/>
<dbReference type="EchoBASE" id="EB4052"/>
<dbReference type="eggNOG" id="ENOG5032979">
    <property type="taxonomic scope" value="Bacteria"/>
</dbReference>
<dbReference type="HOGENOM" id="CLU_211215_0_0_6"/>
<dbReference type="InParanoid" id="P64496"/>
<dbReference type="OMA" id="MAFYVPD"/>
<dbReference type="OrthoDB" id="6556031at2"/>
<dbReference type="PhylomeDB" id="P64496"/>
<dbReference type="BioCyc" id="EcoCyc:G6982-MONOMER"/>
<dbReference type="EvolutionaryTrace" id="P64496"/>
<dbReference type="PRO" id="PR:P64496"/>
<dbReference type="Proteomes" id="UP000000625">
    <property type="component" value="Chromosome"/>
</dbReference>
<dbReference type="Gene3D" id="3.30.160.220">
    <property type="entry name" value="YoaG"/>
    <property type="match status" value="1"/>
</dbReference>
<dbReference type="InterPro" id="IPR015051">
    <property type="entry name" value="YoaG"/>
</dbReference>
<dbReference type="InterPro" id="IPR036489">
    <property type="entry name" value="YoaG_sf"/>
</dbReference>
<dbReference type="Pfam" id="PF08956">
    <property type="entry name" value="DUF1869"/>
    <property type="match status" value="1"/>
</dbReference>
<dbReference type="SUPFAM" id="SSF103063">
    <property type="entry name" value="Hypothetical protein YoaG"/>
    <property type="match status" value="1"/>
</dbReference>
<sequence>MGKATYTVTVTNNSNGVSVDYETETPMTLLVPEVAAEVIKDLVNTVRSYDTENEHDVCGW</sequence>